<feature type="chain" id="PRO_0000296968" description="Ribosomal RNA small subunit methyltransferase J">
    <location>
        <begin position="1"/>
        <end position="220"/>
    </location>
</feature>
<feature type="binding site" evidence="1">
    <location>
        <begin position="55"/>
        <end position="56"/>
    </location>
    <ligand>
        <name>S-adenosyl-L-methionine</name>
        <dbReference type="ChEBI" id="CHEBI:59789"/>
    </ligand>
</feature>
<feature type="binding site" evidence="1">
    <location>
        <begin position="71"/>
        <end position="72"/>
    </location>
    <ligand>
        <name>S-adenosyl-L-methionine</name>
        <dbReference type="ChEBI" id="CHEBI:59789"/>
    </ligand>
</feature>
<feature type="binding site" evidence="1">
    <location>
        <position position="123"/>
    </location>
    <ligand>
        <name>S-adenosyl-L-methionine</name>
        <dbReference type="ChEBI" id="CHEBI:59789"/>
    </ligand>
</feature>
<proteinExistence type="inferred from homology"/>
<dbReference type="EC" id="2.1.1.242" evidence="1"/>
<dbReference type="EMBL" id="CP000283">
    <property type="protein sequence ID" value="ABE40572.1"/>
    <property type="molecule type" value="Genomic_DNA"/>
</dbReference>
<dbReference type="SMR" id="Q134B7"/>
<dbReference type="STRING" id="316057.RPD_3348"/>
<dbReference type="KEGG" id="rpd:RPD_3348"/>
<dbReference type="eggNOG" id="COG0500">
    <property type="taxonomic scope" value="Bacteria"/>
</dbReference>
<dbReference type="HOGENOM" id="CLU_076324_0_0_5"/>
<dbReference type="BioCyc" id="RPAL316057:RPD_RS16835-MONOMER"/>
<dbReference type="Proteomes" id="UP000001818">
    <property type="component" value="Chromosome"/>
</dbReference>
<dbReference type="GO" id="GO:0005737">
    <property type="term" value="C:cytoplasm"/>
    <property type="evidence" value="ECO:0007669"/>
    <property type="project" value="UniProtKB-SubCell"/>
</dbReference>
<dbReference type="GO" id="GO:0008990">
    <property type="term" value="F:rRNA (guanine-N2-)-methyltransferase activity"/>
    <property type="evidence" value="ECO:0007669"/>
    <property type="project" value="UniProtKB-UniRule"/>
</dbReference>
<dbReference type="Gene3D" id="3.40.50.150">
    <property type="entry name" value="Vaccinia Virus protein VP39"/>
    <property type="match status" value="1"/>
</dbReference>
<dbReference type="HAMAP" id="MF_01523">
    <property type="entry name" value="16SrRNA_methyltr_J"/>
    <property type="match status" value="1"/>
</dbReference>
<dbReference type="InterPro" id="IPR007536">
    <property type="entry name" value="16SrRNA_methylTrfase_J"/>
</dbReference>
<dbReference type="InterPro" id="IPR029063">
    <property type="entry name" value="SAM-dependent_MTases_sf"/>
</dbReference>
<dbReference type="PANTHER" id="PTHR36112">
    <property type="entry name" value="RIBOSOMAL RNA SMALL SUBUNIT METHYLTRANSFERASE J"/>
    <property type="match status" value="1"/>
</dbReference>
<dbReference type="PANTHER" id="PTHR36112:SF1">
    <property type="entry name" value="RIBOSOMAL RNA SMALL SUBUNIT METHYLTRANSFERASE J"/>
    <property type="match status" value="1"/>
</dbReference>
<dbReference type="Pfam" id="PF04445">
    <property type="entry name" value="SAM_MT"/>
    <property type="match status" value="1"/>
</dbReference>
<dbReference type="SUPFAM" id="SSF53335">
    <property type="entry name" value="S-adenosyl-L-methionine-dependent methyltransferases"/>
    <property type="match status" value="1"/>
</dbReference>
<comment type="function">
    <text evidence="1">Specifically methylates the guanosine in position 1516 of 16S rRNA.</text>
</comment>
<comment type="catalytic activity">
    <reaction evidence="1">
        <text>guanosine(1516) in 16S rRNA + S-adenosyl-L-methionine = N(2)-methylguanosine(1516) in 16S rRNA + S-adenosyl-L-homocysteine + H(+)</text>
        <dbReference type="Rhea" id="RHEA:43220"/>
        <dbReference type="Rhea" id="RHEA-COMP:10412"/>
        <dbReference type="Rhea" id="RHEA-COMP:10413"/>
        <dbReference type="ChEBI" id="CHEBI:15378"/>
        <dbReference type="ChEBI" id="CHEBI:57856"/>
        <dbReference type="ChEBI" id="CHEBI:59789"/>
        <dbReference type="ChEBI" id="CHEBI:74269"/>
        <dbReference type="ChEBI" id="CHEBI:74481"/>
        <dbReference type="EC" id="2.1.1.242"/>
    </reaction>
</comment>
<comment type="subcellular location">
    <subcellularLocation>
        <location evidence="1">Cytoplasm</location>
    </subcellularLocation>
</comment>
<comment type="similarity">
    <text evidence="1">Belongs to the methyltransferase superfamily. RsmJ family.</text>
</comment>
<organism>
    <name type="scientific">Rhodopseudomonas palustris (strain BisB5)</name>
    <dbReference type="NCBI Taxonomy" id="316057"/>
    <lineage>
        <taxon>Bacteria</taxon>
        <taxon>Pseudomonadati</taxon>
        <taxon>Pseudomonadota</taxon>
        <taxon>Alphaproteobacteria</taxon>
        <taxon>Hyphomicrobiales</taxon>
        <taxon>Nitrobacteraceae</taxon>
        <taxon>Rhodopseudomonas</taxon>
    </lineage>
</organism>
<evidence type="ECO:0000255" key="1">
    <source>
        <dbReference type="HAMAP-Rule" id="MF_01523"/>
    </source>
</evidence>
<sequence>MSAISRSALAVDFVGGAVGYKLRSGAARSHALLKATGVSANRPLHVIDATAGLGRDSFLLASMGATVTLIERSPQVHALLAQGLEAARAESDEIAAIVARMTLIHGDARALLPTLQADVVTVDPMHPARTKTALVKQEMRLLREMVGADPDVADLMQAALVARCGRVVLKWPLRAEPLAGIRKPSYQIAGKTVRYDVFVNPRAPAEEALPRADDLALFRF</sequence>
<gene>
    <name evidence="1" type="primary">rsmJ</name>
    <name type="ordered locus">RPD_3348</name>
</gene>
<reference key="1">
    <citation type="submission" date="2006-03" db="EMBL/GenBank/DDBJ databases">
        <title>Complete sequence of Rhodopseudomonas palustris BisB5.</title>
        <authorList>
            <consortium name="US DOE Joint Genome Institute"/>
            <person name="Copeland A."/>
            <person name="Lucas S."/>
            <person name="Lapidus A."/>
            <person name="Barry K."/>
            <person name="Detter J.C."/>
            <person name="Glavina del Rio T."/>
            <person name="Hammon N."/>
            <person name="Israni S."/>
            <person name="Dalin E."/>
            <person name="Tice H."/>
            <person name="Pitluck S."/>
            <person name="Chain P."/>
            <person name="Malfatti S."/>
            <person name="Shin M."/>
            <person name="Vergez L."/>
            <person name="Schmutz J."/>
            <person name="Larimer F."/>
            <person name="Land M."/>
            <person name="Hauser L."/>
            <person name="Pelletier D.A."/>
            <person name="Kyrpides N."/>
            <person name="Lykidis A."/>
            <person name="Oda Y."/>
            <person name="Harwood C.S."/>
            <person name="Richardson P."/>
        </authorList>
    </citation>
    <scope>NUCLEOTIDE SEQUENCE [LARGE SCALE GENOMIC DNA]</scope>
    <source>
        <strain>BisB5</strain>
    </source>
</reference>
<name>RSMJ_RHOPS</name>
<keyword id="KW-0963">Cytoplasm</keyword>
<keyword id="KW-0489">Methyltransferase</keyword>
<keyword id="KW-0698">rRNA processing</keyword>
<keyword id="KW-0949">S-adenosyl-L-methionine</keyword>
<keyword id="KW-0808">Transferase</keyword>
<accession>Q134B7</accession>
<protein>
    <recommendedName>
        <fullName evidence="1">Ribosomal RNA small subunit methyltransferase J</fullName>
        <ecNumber evidence="1">2.1.1.242</ecNumber>
    </recommendedName>
    <alternativeName>
        <fullName evidence="1">16S rRNA m2G1516 methyltransferase</fullName>
    </alternativeName>
    <alternativeName>
        <fullName evidence="1">rRNA (guanine-N(2)-)-methyltransferase</fullName>
    </alternativeName>
</protein>